<reference key="1">
    <citation type="journal article" date="2004" name="Science">
        <title>The Ashbya gossypii genome as a tool for mapping the ancient Saccharomyces cerevisiae genome.</title>
        <authorList>
            <person name="Dietrich F.S."/>
            <person name="Voegeli S."/>
            <person name="Brachat S."/>
            <person name="Lerch A."/>
            <person name="Gates K."/>
            <person name="Steiner S."/>
            <person name="Mohr C."/>
            <person name="Poehlmann R."/>
            <person name="Luedi P."/>
            <person name="Choi S."/>
            <person name="Wing R.A."/>
            <person name="Flavier A."/>
            <person name="Gaffney T.D."/>
            <person name="Philippsen P."/>
        </authorList>
    </citation>
    <scope>NUCLEOTIDE SEQUENCE [LARGE SCALE GENOMIC DNA]</scope>
    <source>
        <strain>ATCC 10895 / CBS 109.51 / FGSC 9923 / NRRL Y-1056</strain>
    </source>
</reference>
<reference key="2">
    <citation type="journal article" date="2013" name="G3 (Bethesda)">
        <title>Genomes of Ashbya fungi isolated from insects reveal four mating-type loci, numerous translocations, lack of transposons, and distinct gene duplications.</title>
        <authorList>
            <person name="Dietrich F.S."/>
            <person name="Voegeli S."/>
            <person name="Kuo S."/>
            <person name="Philippsen P."/>
        </authorList>
    </citation>
    <scope>GENOME REANNOTATION</scope>
    <source>
        <strain>ATCC 10895 / CBS 109.51 / FGSC 9923 / NRRL Y-1056</strain>
    </source>
</reference>
<dbReference type="EMBL" id="AE016819">
    <property type="protein sequence ID" value="AAS53574.1"/>
    <property type="molecule type" value="Genomic_DNA"/>
</dbReference>
<dbReference type="RefSeq" id="NP_985750.1">
    <property type="nucleotide sequence ID" value="NM_211104.1"/>
</dbReference>
<dbReference type="SMR" id="Q753W9"/>
<dbReference type="FunCoup" id="Q753W9">
    <property type="interactions" value="150"/>
</dbReference>
<dbReference type="STRING" id="284811.Q753W9"/>
<dbReference type="EnsemblFungi" id="AAS53574">
    <property type="protein sequence ID" value="AAS53574"/>
    <property type="gene ID" value="AGOS_AFR203C"/>
</dbReference>
<dbReference type="GeneID" id="4622011"/>
<dbReference type="KEGG" id="ago:AGOS_AFR203C"/>
<dbReference type="eggNOG" id="ENOG502S3GS">
    <property type="taxonomic scope" value="Eukaryota"/>
</dbReference>
<dbReference type="HOGENOM" id="CLU_095757_0_0_1"/>
<dbReference type="InParanoid" id="Q753W9"/>
<dbReference type="OMA" id="ENMPPNA"/>
<dbReference type="OrthoDB" id="3344830at2759"/>
<dbReference type="Proteomes" id="UP000000591">
    <property type="component" value="Chromosome VI"/>
</dbReference>
<dbReference type="GO" id="GO:0031262">
    <property type="term" value="C:Ndc80 complex"/>
    <property type="evidence" value="ECO:0000250"/>
    <property type="project" value="UniProtKB"/>
</dbReference>
<dbReference type="GO" id="GO:0005634">
    <property type="term" value="C:nucleus"/>
    <property type="evidence" value="ECO:0007669"/>
    <property type="project" value="UniProtKB-SubCell"/>
</dbReference>
<dbReference type="GO" id="GO:0042802">
    <property type="term" value="F:identical protein binding"/>
    <property type="evidence" value="ECO:0007669"/>
    <property type="project" value="EnsemblFungi"/>
</dbReference>
<dbReference type="GO" id="GO:0051301">
    <property type="term" value="P:cell division"/>
    <property type="evidence" value="ECO:0007669"/>
    <property type="project" value="UniProtKB-KW"/>
</dbReference>
<dbReference type="GO" id="GO:0098653">
    <property type="term" value="P:centromere clustering"/>
    <property type="evidence" value="ECO:0007669"/>
    <property type="project" value="EnsemblFungi"/>
</dbReference>
<dbReference type="GO" id="GO:0007059">
    <property type="term" value="P:chromosome segregation"/>
    <property type="evidence" value="ECO:0000318"/>
    <property type="project" value="GO_Central"/>
</dbReference>
<dbReference type="GO" id="GO:0031134">
    <property type="term" value="P:sister chromatid biorientation"/>
    <property type="evidence" value="ECO:0000250"/>
    <property type="project" value="UniProtKB"/>
</dbReference>
<dbReference type="CDD" id="cd11565">
    <property type="entry name" value="RWD_Spc24"/>
    <property type="match status" value="1"/>
</dbReference>
<dbReference type="Gene3D" id="3.30.160.430">
    <property type="match status" value="1"/>
</dbReference>
<dbReference type="InterPro" id="IPR013252">
    <property type="entry name" value="Ndc80_Spc24"/>
</dbReference>
<dbReference type="InterPro" id="IPR038066">
    <property type="entry name" value="Spc24_Fungi_globular_sf"/>
</dbReference>
<dbReference type="PANTHER" id="PTHR22142">
    <property type="match status" value="1"/>
</dbReference>
<dbReference type="PANTHER" id="PTHR22142:SF2">
    <property type="entry name" value="KINETOCHORE PROTEIN SPC24"/>
    <property type="match status" value="1"/>
</dbReference>
<dbReference type="Pfam" id="PF08286">
    <property type="entry name" value="Spc24"/>
    <property type="match status" value="1"/>
</dbReference>
<dbReference type="SUPFAM" id="SSF143026">
    <property type="entry name" value="Kinetochore globular domain"/>
    <property type="match status" value="1"/>
</dbReference>
<organism>
    <name type="scientific">Eremothecium gossypii (strain ATCC 10895 / CBS 109.51 / FGSC 9923 / NRRL Y-1056)</name>
    <name type="common">Yeast</name>
    <name type="synonym">Ashbya gossypii</name>
    <dbReference type="NCBI Taxonomy" id="284811"/>
    <lineage>
        <taxon>Eukaryota</taxon>
        <taxon>Fungi</taxon>
        <taxon>Dikarya</taxon>
        <taxon>Ascomycota</taxon>
        <taxon>Saccharomycotina</taxon>
        <taxon>Saccharomycetes</taxon>
        <taxon>Saccharomycetales</taxon>
        <taxon>Saccharomycetaceae</taxon>
        <taxon>Eremothecium</taxon>
    </lineage>
</organism>
<gene>
    <name type="primary">SPC24</name>
    <name type="ordered locus">AFR203C</name>
</gene>
<name>SPC24_EREGS</name>
<keyword id="KW-0131">Cell cycle</keyword>
<keyword id="KW-0132">Cell division</keyword>
<keyword id="KW-0137">Centromere</keyword>
<keyword id="KW-0158">Chromosome</keyword>
<keyword id="KW-0175">Coiled coil</keyword>
<keyword id="KW-0995">Kinetochore</keyword>
<keyword id="KW-0498">Mitosis</keyword>
<keyword id="KW-0539">Nucleus</keyword>
<keyword id="KW-1185">Reference proteome</keyword>
<accession>Q753W9</accession>
<feature type="chain" id="PRO_0000246657" description="Probable kinetochore protein SPC24">
    <location>
        <begin position="1"/>
        <end position="204"/>
    </location>
</feature>
<feature type="coiled-coil region" evidence="3">
    <location>
        <begin position="29"/>
        <end position="127"/>
    </location>
</feature>
<evidence type="ECO:0000250" key="1"/>
<evidence type="ECO:0000250" key="2">
    <source>
        <dbReference type="UniProtKB" id="Q04477"/>
    </source>
</evidence>
<evidence type="ECO:0000255" key="3"/>
<evidence type="ECO:0000305" key="4"/>
<protein>
    <recommendedName>
        <fullName>Probable kinetochore protein SPC24</fullName>
    </recommendedName>
</protein>
<proteinExistence type="inferred from homology"/>
<sequence>MPSQAPGPDVLENPADLLRQTRENFSIAHDLQLLNATEENLRRLMQRTQQLEAKGAQELSELQAQQTERAQAAEAMRAEKETQAQHLQALTHSQDLVRLANELEELEQQLVSLRAELDEGMTQLLQTSEPTAAFQGDAEHEQQSPEVQTNLLKLQLYSSLGVTLDTEHNQALIERGDAAGIDLIALEDDSLSPFFRTKYVWDRL</sequence>
<comment type="function">
    <text evidence="1">Acts as a component of the essential kinetochore-associated NDC80 complex, which is required for chromosome segregation and spindle checkpoint activity.</text>
</comment>
<comment type="subunit">
    <text evidence="1">Component of the NDC80 complex, which consists of NDC80, NUF2, SPC24 and SPC25.</text>
</comment>
<comment type="subcellular location">
    <subcellularLocation>
        <location evidence="2">Nucleus</location>
    </subcellularLocation>
    <subcellularLocation>
        <location evidence="2">Chromosome</location>
        <location evidence="2">Centromere</location>
        <location evidence="2">Kinetochore</location>
    </subcellularLocation>
    <text evidence="2">Associated with kinetochores.</text>
</comment>
<comment type="similarity">
    <text evidence="4">Belongs to the SPC24 family.</text>
</comment>